<protein>
    <recommendedName>
        <fullName evidence="6">Vejocalcin</fullName>
        <shortName evidence="6">VjCa</shortName>
    </recommendedName>
</protein>
<proteinExistence type="evidence at protein level"/>
<accession>P0DPT1</accession>
<organism>
    <name type="scientific">Vaejovis mexicanus</name>
    <name type="common">Mexican scorpion</name>
    <dbReference type="NCBI Taxonomy" id="993612"/>
    <lineage>
        <taxon>Eukaryota</taxon>
        <taxon>Metazoa</taxon>
        <taxon>Ecdysozoa</taxon>
        <taxon>Arthropoda</taxon>
        <taxon>Chelicerata</taxon>
        <taxon>Arachnida</taxon>
        <taxon>Scorpiones</taxon>
        <taxon>Iurida</taxon>
        <taxon>Chactoidea</taxon>
        <taxon>Vaejovidae</taxon>
        <taxon>Vaejovis</taxon>
    </lineage>
</organism>
<evidence type="ECO:0000250" key="1">
    <source>
        <dbReference type="UniProtKB" id="A0A1L4BJ42"/>
    </source>
</evidence>
<evidence type="ECO:0000250" key="2">
    <source>
        <dbReference type="UniProtKB" id="B8QG00"/>
    </source>
</evidence>
<evidence type="ECO:0000250" key="3">
    <source>
        <dbReference type="UniProtKB" id="P59868"/>
    </source>
</evidence>
<evidence type="ECO:0000250" key="4">
    <source>
        <dbReference type="UniProtKB" id="P60254"/>
    </source>
</evidence>
<evidence type="ECO:0000269" key="5">
    <source>
    </source>
</evidence>
<evidence type="ECO:0000303" key="6">
    <source>
    </source>
</evidence>
<evidence type="ECO:0000305" key="7"/>
<evidence type="ECO:0000305" key="8">
    <source>
    </source>
</evidence>
<dbReference type="SMR" id="P0DPT1"/>
<dbReference type="GO" id="GO:0005576">
    <property type="term" value="C:extracellular region"/>
    <property type="evidence" value="ECO:0007669"/>
    <property type="project" value="UniProtKB-SubCell"/>
</dbReference>
<dbReference type="GO" id="GO:0019855">
    <property type="term" value="F:calcium channel inhibitor activity"/>
    <property type="evidence" value="ECO:0007669"/>
    <property type="project" value="InterPro"/>
</dbReference>
<dbReference type="GO" id="GO:0090729">
    <property type="term" value="F:toxin activity"/>
    <property type="evidence" value="ECO:0007669"/>
    <property type="project" value="UniProtKB-KW"/>
</dbReference>
<dbReference type="InterPro" id="IPR012632">
    <property type="entry name" value="Scorpion_calcine"/>
</dbReference>
<dbReference type="Pfam" id="PF08099">
    <property type="entry name" value="Toxin_27"/>
    <property type="match status" value="1"/>
</dbReference>
<dbReference type="SUPFAM" id="SSF57059">
    <property type="entry name" value="omega toxin-like"/>
    <property type="match status" value="1"/>
</dbReference>
<dbReference type="PROSITE" id="PS60028">
    <property type="entry name" value="SCORPION_CALCINE"/>
    <property type="match status" value="1"/>
</dbReference>
<name>CAVEJ_VAEME</name>
<sequence>ADCLAHLKLCKKNNDCCSKKCSRRGTNPEQRCR</sequence>
<comment type="function">
    <text evidence="1 2 3 4 5">This toxin stabilizes ryanodine receptor 1 (RyR1) opening in a long-lasting subconductance state (60% of the full conductance state) (PubMed:27114612). Furthermore, it triggers calcium release from sarcoplasmic vesicles (31 nM are enough to induce a sharp release, and 65% of the total calcium is released after toxin (100 nM) addition) probably by acting as a cell-penetrating peptide (CPP) (PubMed:27114612). In addition, it has been shown to dose-dependently stimulate ryanodine binding to RyR1 (EC(50)=3.7 nM) (PubMed:27114612). It also augments the bell-shaped calcium-[3H]ryanodine binding curve that is maximal at about 10 uM calcium concentration (PubMed:27114612). It binds a different site as ryanodine (By similarity). It acts synergistically with caffeine (By similarity). In vivo, intracerebroventricular injection into mice induces neurotoxic symptoms, followed by death (By similarity).</text>
</comment>
<comment type="subcellular location">
    <subcellularLocation>
        <location evidence="5">Secreted</location>
    </subcellularLocation>
</comment>
<comment type="tissue specificity">
    <text evidence="8">Expressed by the venom gland.</text>
</comment>
<comment type="domain">
    <text evidence="3">The presence of a 'disulfide through disulfide knot' structurally defines this protein as a knottin.</text>
</comment>
<comment type="mass spectrometry"/>
<comment type="similarity">
    <text evidence="7">Belongs to the scorpion calcin family.</text>
</comment>
<reference key="1">
    <citation type="journal article" date="2016" name="J. Gen. Physiol.">
        <title>Structure-function relationships of peptides forming the calcin family of ryanodine receptor ligands.</title>
        <authorList>
            <person name="Xiao L."/>
            <person name="Gurrola G.B."/>
            <person name="Zhang J."/>
            <person name="Valdivia C.R."/>
            <person name="SanMartin M."/>
            <person name="Zamudio F.Z."/>
            <person name="Zhang L."/>
            <person name="Possani L.D."/>
            <person name="Valdivia H.H."/>
        </authorList>
    </citation>
    <scope>PROTEIN SEQUENCE</scope>
    <scope>MASS SPECTROMETRY</scope>
    <scope>FUNCTION</scope>
    <scope>SUBCELLULAR LOCATION</scope>
    <scope>3D-STRUCTURE MODELING</scope>
    <source>
        <tissue>Venom</tissue>
    </source>
</reference>
<feature type="chain" id="PRO_0000446291" description="Vejocalcin" evidence="5">
    <location>
        <begin position="1"/>
        <end position="33"/>
    </location>
</feature>
<feature type="region of interest" description="Essential for stimulation of [3H]ryanodine binding to RYR1" evidence="3 4">
    <location>
        <begin position="23"/>
        <end position="24"/>
    </location>
</feature>
<feature type="site" description="Essential for stimulation of [3H]ryanodine binding to RYR1" evidence="3">
    <location>
        <position position="31"/>
    </location>
</feature>
<feature type="site" description="Essential for stimulation of [3H]ryanodine binding to RYR1" evidence="3">
    <location>
        <position position="33"/>
    </location>
</feature>
<feature type="disulfide bond" evidence="3">
    <location>
        <begin position="3"/>
        <end position="17"/>
    </location>
</feature>
<feature type="disulfide bond" evidence="3">
    <location>
        <begin position="10"/>
        <end position="21"/>
    </location>
</feature>
<feature type="disulfide bond" evidence="3">
    <location>
        <begin position="16"/>
        <end position="32"/>
    </location>
</feature>
<keyword id="KW-0108">Calcium channel impairing toxin</keyword>
<keyword id="KW-0903">Direct protein sequencing</keyword>
<keyword id="KW-1015">Disulfide bond</keyword>
<keyword id="KW-0872">Ion channel impairing toxin</keyword>
<keyword id="KW-0960">Knottin</keyword>
<keyword id="KW-0528">Neurotoxin</keyword>
<keyword id="KW-1219">Ryanodine-sensitive calcium-release channel impairing toxin</keyword>
<keyword id="KW-0964">Secreted</keyword>
<keyword id="KW-0800">Toxin</keyword>